<accession>Q00213</accession>
<accession>I0JK69</accession>
<organism>
    <name type="scientific">Halobacillus halophilus (strain ATCC 35676 / DSM 2266 / JCM 20832 / KCTC 3685 / LMG 17431 / NBRC 102448 / NCIMB 2269)</name>
    <name type="common">Sporosarcina halophila</name>
    <dbReference type="NCBI Taxonomy" id="866895"/>
    <lineage>
        <taxon>Bacteria</taxon>
        <taxon>Bacillati</taxon>
        <taxon>Bacillota</taxon>
        <taxon>Bacilli</taxon>
        <taxon>Bacillales</taxon>
        <taxon>Bacillaceae</taxon>
        <taxon>Halobacillus</taxon>
    </lineage>
</organism>
<dbReference type="EMBL" id="X55160">
    <property type="protein sequence ID" value="CAA38959.1"/>
    <property type="molecule type" value="Genomic_DNA"/>
</dbReference>
<dbReference type="EMBL" id="HE717023">
    <property type="protein sequence ID" value="CCG44538.1"/>
    <property type="molecule type" value="Genomic_DNA"/>
</dbReference>
<dbReference type="PIR" id="C48180">
    <property type="entry name" value="C48180"/>
</dbReference>
<dbReference type="RefSeq" id="WP_014642441.1">
    <property type="nucleotide sequence ID" value="NC_017668.1"/>
</dbReference>
<dbReference type="SMR" id="Q00213"/>
<dbReference type="STRING" id="866895.HBHAL_2184"/>
<dbReference type="KEGG" id="hhd:HBHAL_2184"/>
<dbReference type="PATRIC" id="fig|866895.3.peg.1199"/>
<dbReference type="eggNOG" id="ENOG5032YCI">
    <property type="taxonomic scope" value="Bacteria"/>
</dbReference>
<dbReference type="HOGENOM" id="CLU_169738_2_0_9"/>
<dbReference type="Proteomes" id="UP000007397">
    <property type="component" value="Chromosome"/>
</dbReference>
<dbReference type="GO" id="GO:0003690">
    <property type="term" value="F:double-stranded DNA binding"/>
    <property type="evidence" value="ECO:0007669"/>
    <property type="project" value="InterPro"/>
</dbReference>
<dbReference type="GO" id="GO:0006265">
    <property type="term" value="P:DNA topological change"/>
    <property type="evidence" value="ECO:0007669"/>
    <property type="project" value="InterPro"/>
</dbReference>
<dbReference type="GO" id="GO:0030435">
    <property type="term" value="P:sporulation resulting in formation of a cellular spore"/>
    <property type="evidence" value="ECO:0007669"/>
    <property type="project" value="UniProtKB-KW"/>
</dbReference>
<dbReference type="Gene3D" id="6.10.10.80">
    <property type="entry name" value="Small, acid-soluble spore protein, alpha/beta type-like"/>
    <property type="match status" value="1"/>
</dbReference>
<dbReference type="InterPro" id="IPR001448">
    <property type="entry name" value="SASP_alpha/beta-type"/>
</dbReference>
<dbReference type="InterPro" id="IPR018126">
    <property type="entry name" value="SASP_alpha/beta-type_CS"/>
</dbReference>
<dbReference type="InterPro" id="IPR050847">
    <property type="entry name" value="SASP_DNA-binding"/>
</dbReference>
<dbReference type="InterPro" id="IPR038300">
    <property type="entry name" value="SASP_sf_alpha/beta"/>
</dbReference>
<dbReference type="PANTHER" id="PTHR36107">
    <property type="entry name" value="SMALL, ACID-SOLUBLE SPORE PROTEIN A"/>
    <property type="match status" value="1"/>
</dbReference>
<dbReference type="PANTHER" id="PTHR36107:SF1">
    <property type="entry name" value="SMALL, ACID-SOLUBLE SPORE PROTEIN A"/>
    <property type="match status" value="1"/>
</dbReference>
<dbReference type="Pfam" id="PF00269">
    <property type="entry name" value="SASP"/>
    <property type="match status" value="1"/>
</dbReference>
<dbReference type="PROSITE" id="PS00304">
    <property type="entry name" value="SASP_1"/>
    <property type="match status" value="1"/>
</dbReference>
<dbReference type="PROSITE" id="PS00684">
    <property type="entry name" value="SASP_2"/>
    <property type="match status" value="1"/>
</dbReference>
<evidence type="ECO:0000305" key="1"/>
<feature type="chain" id="PRO_0000196311" description="Small, acid-soluble spore protein 1">
    <location>
        <begin position="1"/>
        <end position="72"/>
    </location>
</feature>
<feature type="site" description="Cleavage; by spore protease">
    <location>
        <begin position="25"/>
        <end position="26"/>
    </location>
</feature>
<comment type="function">
    <text>SASP are bound to spore DNA. They are double-stranded DNA-binding proteins that cause DNA to change to an a-like conformation. They protect the DNA backbone from chemical and enzymatic cleavage and are thus involved in dormant spore's high resistance to UV light.</text>
</comment>
<comment type="miscellaneous">
    <text>SASP are degraded in the first minutes of spore germination and provide amino acids for both new protein synthesis and metabolism.</text>
</comment>
<comment type="similarity">
    <text evidence="1">Belongs to the alpha/beta-type SASP family.</text>
</comment>
<gene>
    <name type="primary">Sh-1</name>
    <name type="ordered locus">HBHAL_2184</name>
</gene>
<reference key="1">
    <citation type="journal article" date="1990" name="FEMS Microbiol. Lett.">
        <title>Small, acid-soluble, spore proteins and their genes from two species of Sporosarcina.</title>
        <authorList>
            <person name="Magill N.G."/>
            <person name="Loshon C.A."/>
            <person name="Setlow P."/>
        </authorList>
    </citation>
    <scope>NUCLEOTIDE SEQUENCE [GENOMIC DNA]</scope>
    <source>
        <strain>ATCC 35676 / DSM 2266 / JCM 20832 / KCTC 3685 / LMG 17431 / NBRC 102448 / NCIMB 2269</strain>
    </source>
</reference>
<reference key="2">
    <citation type="journal article" date="2013" name="Environ. Microbiol.">
        <title>Chloride and organic osmolytes: a hybrid strategy to cope with elevated salinities by the moderately halophilic, chloride-dependent bacterium Halobacillus halophilus.</title>
        <authorList>
            <person name="Saum S.H."/>
            <person name="Pfeiffer F."/>
            <person name="Palm P."/>
            <person name="Rampp M."/>
            <person name="Schuster S.C."/>
            <person name="Muller V."/>
            <person name="Oesterhelt D."/>
        </authorList>
    </citation>
    <scope>NUCLEOTIDE SEQUENCE [LARGE SCALE GENOMIC DNA]</scope>
    <source>
        <strain>ATCC 35676 / DSM 2266 / JCM 20832 / KCTC 3685 / LMG 17431 / NBRC 102448 / NCIMB 2269</strain>
    </source>
</reference>
<protein>
    <recommendedName>
        <fullName>Small, acid-soluble spore protein 1</fullName>
        <shortName>SASP</shortName>
    </recommendedName>
</protein>
<name>SAS1_HALH3</name>
<keyword id="KW-0238">DNA-binding</keyword>
<keyword id="KW-1185">Reference proteome</keyword>
<keyword id="KW-0749">Sporulation</keyword>
<sequence>MANNNSSNELVVPGVQQALDQMKYEIAQEFGVQLGADSTSRANGSVGGEITKRLVQMAEQQFGGQQYGQQQK</sequence>
<proteinExistence type="inferred from homology"/>